<reference key="1">
    <citation type="submission" date="2006-12" db="EMBL/GenBank/DDBJ databases">
        <title>Complete sequence of Halorhodospira halophila SL1.</title>
        <authorList>
            <consortium name="US DOE Joint Genome Institute"/>
            <person name="Copeland A."/>
            <person name="Lucas S."/>
            <person name="Lapidus A."/>
            <person name="Barry K."/>
            <person name="Detter J.C."/>
            <person name="Glavina del Rio T."/>
            <person name="Hammon N."/>
            <person name="Israni S."/>
            <person name="Dalin E."/>
            <person name="Tice H."/>
            <person name="Pitluck S."/>
            <person name="Saunders E."/>
            <person name="Brettin T."/>
            <person name="Bruce D."/>
            <person name="Han C."/>
            <person name="Tapia R."/>
            <person name="Schmutz J."/>
            <person name="Larimer F."/>
            <person name="Land M."/>
            <person name="Hauser L."/>
            <person name="Kyrpides N."/>
            <person name="Mikhailova N."/>
            <person name="Hoff W."/>
            <person name="Richardson P."/>
        </authorList>
    </citation>
    <scope>NUCLEOTIDE SEQUENCE [LARGE SCALE GENOMIC DNA]</scope>
    <source>
        <strain>DSM 244 / SL1</strain>
    </source>
</reference>
<protein>
    <recommendedName>
        <fullName evidence="1">Ion-translocating oxidoreductase complex subunit D</fullName>
        <ecNumber evidence="1">7.-.-.-</ecNumber>
    </recommendedName>
    <alternativeName>
        <fullName evidence="1">Rnf electron transport complex subunit D</fullName>
    </alternativeName>
</protein>
<dbReference type="EC" id="7.-.-.-" evidence="1"/>
<dbReference type="EMBL" id="CP000544">
    <property type="protein sequence ID" value="ABM61080.1"/>
    <property type="molecule type" value="Genomic_DNA"/>
</dbReference>
<dbReference type="RefSeq" id="WP_011813103.1">
    <property type="nucleotide sequence ID" value="NC_008789.1"/>
</dbReference>
<dbReference type="SMR" id="A1WTR8"/>
<dbReference type="STRING" id="349124.Hhal_0286"/>
<dbReference type="KEGG" id="hha:Hhal_0286"/>
<dbReference type="eggNOG" id="COG4658">
    <property type="taxonomic scope" value="Bacteria"/>
</dbReference>
<dbReference type="HOGENOM" id="CLU_042020_1_0_6"/>
<dbReference type="OrthoDB" id="9776359at2"/>
<dbReference type="Proteomes" id="UP000000647">
    <property type="component" value="Chromosome"/>
</dbReference>
<dbReference type="GO" id="GO:0005886">
    <property type="term" value="C:plasma membrane"/>
    <property type="evidence" value="ECO:0007669"/>
    <property type="project" value="UniProtKB-SubCell"/>
</dbReference>
<dbReference type="GO" id="GO:0022900">
    <property type="term" value="P:electron transport chain"/>
    <property type="evidence" value="ECO:0007669"/>
    <property type="project" value="UniProtKB-UniRule"/>
</dbReference>
<dbReference type="GO" id="GO:0055085">
    <property type="term" value="P:transmembrane transport"/>
    <property type="evidence" value="ECO:0007669"/>
    <property type="project" value="InterPro"/>
</dbReference>
<dbReference type="HAMAP" id="MF_00462">
    <property type="entry name" value="RsxD_RnfD"/>
    <property type="match status" value="1"/>
</dbReference>
<dbReference type="InterPro" id="IPR004338">
    <property type="entry name" value="NqrB/RnfD"/>
</dbReference>
<dbReference type="InterPro" id="IPR011303">
    <property type="entry name" value="RnfD_bac"/>
</dbReference>
<dbReference type="NCBIfam" id="TIGR01946">
    <property type="entry name" value="rnfD"/>
    <property type="match status" value="1"/>
</dbReference>
<dbReference type="PANTHER" id="PTHR30578">
    <property type="entry name" value="ELECTRON TRANSPORT COMPLEX PROTEIN RNFD"/>
    <property type="match status" value="1"/>
</dbReference>
<dbReference type="PANTHER" id="PTHR30578:SF0">
    <property type="entry name" value="ION-TRANSLOCATING OXIDOREDUCTASE COMPLEX SUBUNIT D"/>
    <property type="match status" value="1"/>
</dbReference>
<dbReference type="Pfam" id="PF03116">
    <property type="entry name" value="NQR2_RnfD_RnfE"/>
    <property type="match status" value="1"/>
</dbReference>
<comment type="function">
    <text evidence="1">Part of a membrane-bound complex that couples electron transfer with translocation of ions across the membrane.</text>
</comment>
<comment type="cofactor">
    <cofactor evidence="1">
        <name>FMN</name>
        <dbReference type="ChEBI" id="CHEBI:58210"/>
    </cofactor>
</comment>
<comment type="subunit">
    <text evidence="1">The complex is composed of six subunits: RnfA, RnfB, RnfC, RnfD, RnfE and RnfG.</text>
</comment>
<comment type="subcellular location">
    <subcellularLocation>
        <location evidence="1">Cell inner membrane</location>
        <topology evidence="1">Multi-pass membrane protein</topology>
    </subcellularLocation>
</comment>
<comment type="similarity">
    <text evidence="1">Belongs to the NqrB/RnfD family.</text>
</comment>
<name>RNFD_HALHL</name>
<sequence length="357" mass="37295">MSELVAGPHTRAPLSLPTLMRQVLLAAAPATAFGVWLYGWPALNLLLITLVTVLVAEAACLRAAGRPVRSGLGDSSALVAGWILAMSLPPWAPWWIGVIGGLLAVVLGKGVFGGTGQNLFNPAMVARVALLIAFPVEMTRWVEPAPLGSAVAPGFLESLGITFTGTADWDAVTGATTLDATRTAVTEGQSIETALPEAYQPALALLGYAPGSLAEGSALLLALGGVYLIYRRVIAWEIPAVMLATLAVLATVFHTLDPTRYADAGVHILAGSTLLAAFFIATDPTTSPTTTVGRAVFAAGCAVIVWVVRTYGGYPEATAFAVLLMNAFTPLIDHWIRPRVYGRTRLGAPLSTDREGP</sequence>
<organism>
    <name type="scientific">Halorhodospira halophila (strain DSM 244 / SL1)</name>
    <name type="common">Ectothiorhodospira halophila (strain DSM 244 / SL1)</name>
    <dbReference type="NCBI Taxonomy" id="349124"/>
    <lineage>
        <taxon>Bacteria</taxon>
        <taxon>Pseudomonadati</taxon>
        <taxon>Pseudomonadota</taxon>
        <taxon>Gammaproteobacteria</taxon>
        <taxon>Chromatiales</taxon>
        <taxon>Ectothiorhodospiraceae</taxon>
        <taxon>Halorhodospira</taxon>
    </lineage>
</organism>
<gene>
    <name evidence="1" type="primary">rnfD</name>
    <name type="ordered locus">Hhal_0286</name>
</gene>
<feature type="chain" id="PRO_1000125387" description="Ion-translocating oxidoreductase complex subunit D">
    <location>
        <begin position="1"/>
        <end position="357"/>
    </location>
</feature>
<feature type="transmembrane region" description="Helical" evidence="1">
    <location>
        <begin position="35"/>
        <end position="55"/>
    </location>
</feature>
<feature type="transmembrane region" description="Helical" evidence="1">
    <location>
        <begin position="88"/>
        <end position="108"/>
    </location>
</feature>
<feature type="transmembrane region" description="Helical" evidence="1">
    <location>
        <begin position="119"/>
        <end position="139"/>
    </location>
</feature>
<feature type="transmembrane region" description="Helical" evidence="1">
    <location>
        <begin position="209"/>
        <end position="229"/>
    </location>
</feature>
<feature type="transmembrane region" description="Helical" evidence="1">
    <location>
        <begin position="233"/>
        <end position="253"/>
    </location>
</feature>
<feature type="transmembrane region" description="Helical" evidence="1">
    <location>
        <begin position="261"/>
        <end position="281"/>
    </location>
</feature>
<feature type="transmembrane region" description="Helical" evidence="1">
    <location>
        <begin position="295"/>
        <end position="315"/>
    </location>
</feature>
<feature type="transmembrane region" description="Helical" evidence="1">
    <location>
        <begin position="316"/>
        <end position="336"/>
    </location>
</feature>
<feature type="modified residue" description="FMN phosphoryl threonine" evidence="1">
    <location>
        <position position="176"/>
    </location>
</feature>
<keyword id="KW-0997">Cell inner membrane</keyword>
<keyword id="KW-1003">Cell membrane</keyword>
<keyword id="KW-0249">Electron transport</keyword>
<keyword id="KW-0285">Flavoprotein</keyword>
<keyword id="KW-0288">FMN</keyword>
<keyword id="KW-0472">Membrane</keyword>
<keyword id="KW-0597">Phosphoprotein</keyword>
<keyword id="KW-1185">Reference proteome</keyword>
<keyword id="KW-1278">Translocase</keyword>
<keyword id="KW-0812">Transmembrane</keyword>
<keyword id="KW-1133">Transmembrane helix</keyword>
<keyword id="KW-0813">Transport</keyword>
<proteinExistence type="inferred from homology"/>
<accession>A1WTR8</accession>
<evidence type="ECO:0000255" key="1">
    <source>
        <dbReference type="HAMAP-Rule" id="MF_00462"/>
    </source>
</evidence>